<gene>
    <name evidence="1" type="primary">acsA</name>
    <name type="ordered locus">BURPS1106A_A0530</name>
</gene>
<organism>
    <name type="scientific">Burkholderia pseudomallei (strain 1106a)</name>
    <dbReference type="NCBI Taxonomy" id="357348"/>
    <lineage>
        <taxon>Bacteria</taxon>
        <taxon>Pseudomonadati</taxon>
        <taxon>Pseudomonadota</taxon>
        <taxon>Betaproteobacteria</taxon>
        <taxon>Burkholderiales</taxon>
        <taxon>Burkholderiaceae</taxon>
        <taxon>Burkholderia</taxon>
        <taxon>pseudomallei group</taxon>
    </lineage>
</organism>
<dbReference type="EC" id="6.2.1.1" evidence="1"/>
<dbReference type="EMBL" id="CP000573">
    <property type="protein sequence ID" value="ABN93453.1"/>
    <property type="molecule type" value="Genomic_DNA"/>
</dbReference>
<dbReference type="SMR" id="A3P2K7"/>
<dbReference type="KEGG" id="bpl:BURPS1106A_A0530"/>
<dbReference type="HOGENOM" id="CLU_000022_3_6_4"/>
<dbReference type="Proteomes" id="UP000006738">
    <property type="component" value="Chromosome II"/>
</dbReference>
<dbReference type="GO" id="GO:0005829">
    <property type="term" value="C:cytosol"/>
    <property type="evidence" value="ECO:0007669"/>
    <property type="project" value="TreeGrafter"/>
</dbReference>
<dbReference type="GO" id="GO:0003987">
    <property type="term" value="F:acetate-CoA ligase activity"/>
    <property type="evidence" value="ECO:0007669"/>
    <property type="project" value="UniProtKB-UniRule"/>
</dbReference>
<dbReference type="GO" id="GO:0016208">
    <property type="term" value="F:AMP binding"/>
    <property type="evidence" value="ECO:0007669"/>
    <property type="project" value="InterPro"/>
</dbReference>
<dbReference type="GO" id="GO:0005524">
    <property type="term" value="F:ATP binding"/>
    <property type="evidence" value="ECO:0007669"/>
    <property type="project" value="UniProtKB-KW"/>
</dbReference>
<dbReference type="GO" id="GO:0046872">
    <property type="term" value="F:metal ion binding"/>
    <property type="evidence" value="ECO:0007669"/>
    <property type="project" value="UniProtKB-KW"/>
</dbReference>
<dbReference type="GO" id="GO:0019427">
    <property type="term" value="P:acetyl-CoA biosynthetic process from acetate"/>
    <property type="evidence" value="ECO:0007669"/>
    <property type="project" value="InterPro"/>
</dbReference>
<dbReference type="CDD" id="cd05966">
    <property type="entry name" value="ACS"/>
    <property type="match status" value="1"/>
</dbReference>
<dbReference type="FunFam" id="3.40.50.12780:FF:000001">
    <property type="entry name" value="Acetyl-coenzyme A synthetase"/>
    <property type="match status" value="1"/>
</dbReference>
<dbReference type="Gene3D" id="3.30.300.30">
    <property type="match status" value="1"/>
</dbReference>
<dbReference type="Gene3D" id="3.40.50.12780">
    <property type="entry name" value="N-terminal domain of ligase-like"/>
    <property type="match status" value="1"/>
</dbReference>
<dbReference type="HAMAP" id="MF_01123">
    <property type="entry name" value="Ac_CoA_synth"/>
    <property type="match status" value="1"/>
</dbReference>
<dbReference type="InterPro" id="IPR011904">
    <property type="entry name" value="Ac_CoA_lig"/>
</dbReference>
<dbReference type="InterPro" id="IPR032387">
    <property type="entry name" value="ACAS_N"/>
</dbReference>
<dbReference type="InterPro" id="IPR025110">
    <property type="entry name" value="AMP-bd_C"/>
</dbReference>
<dbReference type="InterPro" id="IPR045851">
    <property type="entry name" value="AMP-bd_C_sf"/>
</dbReference>
<dbReference type="InterPro" id="IPR020845">
    <property type="entry name" value="AMP-binding_CS"/>
</dbReference>
<dbReference type="InterPro" id="IPR000873">
    <property type="entry name" value="AMP-dep_synth/lig_dom"/>
</dbReference>
<dbReference type="InterPro" id="IPR042099">
    <property type="entry name" value="ANL_N_sf"/>
</dbReference>
<dbReference type="NCBIfam" id="TIGR02188">
    <property type="entry name" value="Ac_CoA_lig_AcsA"/>
    <property type="match status" value="1"/>
</dbReference>
<dbReference type="NCBIfam" id="NF001208">
    <property type="entry name" value="PRK00174.1"/>
    <property type="match status" value="1"/>
</dbReference>
<dbReference type="PANTHER" id="PTHR24095">
    <property type="entry name" value="ACETYL-COENZYME A SYNTHETASE"/>
    <property type="match status" value="1"/>
</dbReference>
<dbReference type="PANTHER" id="PTHR24095:SF14">
    <property type="entry name" value="ACETYL-COENZYME A SYNTHETASE 1"/>
    <property type="match status" value="1"/>
</dbReference>
<dbReference type="Pfam" id="PF16177">
    <property type="entry name" value="ACAS_N"/>
    <property type="match status" value="1"/>
</dbReference>
<dbReference type="Pfam" id="PF00501">
    <property type="entry name" value="AMP-binding"/>
    <property type="match status" value="1"/>
</dbReference>
<dbReference type="Pfam" id="PF13193">
    <property type="entry name" value="AMP-binding_C"/>
    <property type="match status" value="1"/>
</dbReference>
<dbReference type="SUPFAM" id="SSF56801">
    <property type="entry name" value="Acetyl-CoA synthetase-like"/>
    <property type="match status" value="1"/>
</dbReference>
<dbReference type="PROSITE" id="PS00455">
    <property type="entry name" value="AMP_BINDING"/>
    <property type="match status" value="1"/>
</dbReference>
<keyword id="KW-0007">Acetylation</keyword>
<keyword id="KW-0067">ATP-binding</keyword>
<keyword id="KW-0436">Ligase</keyword>
<keyword id="KW-0460">Magnesium</keyword>
<keyword id="KW-0479">Metal-binding</keyword>
<keyword id="KW-0547">Nucleotide-binding</keyword>
<comment type="function">
    <text evidence="1">Catalyzes the conversion of acetate into acetyl-CoA (AcCoA), an essential intermediate at the junction of anabolic and catabolic pathways. AcsA undergoes a two-step reaction. In the first half reaction, AcsA combines acetate with ATP to form acetyl-adenylate (AcAMP) intermediate. In the second half reaction, it can then transfer the acetyl group from AcAMP to the sulfhydryl group of CoA, forming the product AcCoA.</text>
</comment>
<comment type="catalytic activity">
    <reaction evidence="1">
        <text>acetate + ATP + CoA = acetyl-CoA + AMP + diphosphate</text>
        <dbReference type="Rhea" id="RHEA:23176"/>
        <dbReference type="ChEBI" id="CHEBI:30089"/>
        <dbReference type="ChEBI" id="CHEBI:30616"/>
        <dbReference type="ChEBI" id="CHEBI:33019"/>
        <dbReference type="ChEBI" id="CHEBI:57287"/>
        <dbReference type="ChEBI" id="CHEBI:57288"/>
        <dbReference type="ChEBI" id="CHEBI:456215"/>
        <dbReference type="EC" id="6.2.1.1"/>
    </reaction>
</comment>
<comment type="cofactor">
    <cofactor evidence="1">
        <name>Mg(2+)</name>
        <dbReference type="ChEBI" id="CHEBI:18420"/>
    </cofactor>
</comment>
<comment type="PTM">
    <text evidence="1">Acetylated. Deacetylation by the SIR2-homolog deacetylase activates the enzyme.</text>
</comment>
<comment type="similarity">
    <text evidence="1">Belongs to the ATP-dependent AMP-binding enzyme family.</text>
</comment>
<feature type="chain" id="PRO_1000065281" description="Acetyl-coenzyme A synthetase">
    <location>
        <begin position="1"/>
        <end position="660"/>
    </location>
</feature>
<feature type="binding site" evidence="1">
    <location>
        <begin position="197"/>
        <end position="200"/>
    </location>
    <ligand>
        <name>CoA</name>
        <dbReference type="ChEBI" id="CHEBI:57287"/>
    </ligand>
</feature>
<feature type="binding site" evidence="1">
    <location>
        <position position="317"/>
    </location>
    <ligand>
        <name>CoA</name>
        <dbReference type="ChEBI" id="CHEBI:57287"/>
    </ligand>
</feature>
<feature type="binding site" evidence="1">
    <location>
        <begin position="397"/>
        <end position="399"/>
    </location>
    <ligand>
        <name>ATP</name>
        <dbReference type="ChEBI" id="CHEBI:30616"/>
    </ligand>
</feature>
<feature type="binding site" evidence="1">
    <location>
        <begin position="421"/>
        <end position="426"/>
    </location>
    <ligand>
        <name>ATP</name>
        <dbReference type="ChEBI" id="CHEBI:30616"/>
    </ligand>
</feature>
<feature type="binding site" evidence="1">
    <location>
        <position position="512"/>
    </location>
    <ligand>
        <name>ATP</name>
        <dbReference type="ChEBI" id="CHEBI:30616"/>
    </ligand>
</feature>
<feature type="binding site" evidence="1">
    <location>
        <position position="528"/>
    </location>
    <ligand>
        <name>ATP</name>
        <dbReference type="ChEBI" id="CHEBI:30616"/>
    </ligand>
</feature>
<feature type="binding site" evidence="1">
    <location>
        <position position="536"/>
    </location>
    <ligand>
        <name>CoA</name>
        <dbReference type="ChEBI" id="CHEBI:57287"/>
    </ligand>
</feature>
<feature type="binding site" evidence="1">
    <location>
        <position position="539"/>
    </location>
    <ligand>
        <name>ATP</name>
        <dbReference type="ChEBI" id="CHEBI:30616"/>
    </ligand>
</feature>
<feature type="binding site" evidence="1">
    <location>
        <position position="550"/>
    </location>
    <ligand>
        <name>Mg(2+)</name>
        <dbReference type="ChEBI" id="CHEBI:18420"/>
    </ligand>
</feature>
<feature type="binding site" evidence="1">
    <location>
        <position position="552"/>
    </location>
    <ligand>
        <name>Mg(2+)</name>
        <dbReference type="ChEBI" id="CHEBI:18420"/>
    </ligand>
</feature>
<feature type="binding site" evidence="1">
    <location>
        <position position="555"/>
    </location>
    <ligand>
        <name>Mg(2+)</name>
        <dbReference type="ChEBI" id="CHEBI:18420"/>
    </ligand>
</feature>
<feature type="modified residue" description="N6-acetyllysine" evidence="1">
    <location>
        <position position="625"/>
    </location>
</feature>
<protein>
    <recommendedName>
        <fullName evidence="1">Acetyl-coenzyme A synthetase</fullName>
        <shortName evidence="1">AcCoA synthetase</shortName>
        <shortName evidence="1">Acs</shortName>
        <ecNumber evidence="1">6.2.1.1</ecNumber>
    </recommendedName>
    <alternativeName>
        <fullName evidence="1">Acetate--CoA ligase</fullName>
    </alternativeName>
    <alternativeName>
        <fullName evidence="1">Acyl-activating enzyme</fullName>
    </alternativeName>
</protein>
<evidence type="ECO:0000255" key="1">
    <source>
        <dbReference type="HAMAP-Rule" id="MF_01123"/>
    </source>
</evidence>
<proteinExistence type="inferred from homology"/>
<accession>A3P2K7</accession>
<sequence>MSAIESVLHERRQFAPPAAVEKAAAISGMAAYRALAEEAERDYEGFWARLARETLEWRKPFGKVLDETNAPFYKWFEDGELNASYNCLDRHVAAGLGERVAVIFEADDGTVTRVTYADLLARVSRFANALKKRGVGRGDRVVIYIPMSVEGIVAMQACARIGATHSVVFGGFSSKSLHERIVDVGATALVTADEQMRGGKTLPLKSIADEALAMGGCDAVKTVVVYRRTGGNVDWHAGRDVWMHEMVANESDACEPEWVGAEHPLFILYTSGSTGKPKGVQHSTAGYLLWVAQTMKWTFDWKPDDVFWCTADIGWVTGHSYITYGPLAVGATQVVFEGVPTYPNAGRFWKMIGDHKVTVFYTAPTAIRSLIKAAEADDRVHPRSYDLSSLRIIGTVGEPINPEAWIWYHKNVGQARCPIVDTWWQTETGGHMITPLPGATPTVPGSCTLPLPGIMAAVVDETGQDVPNGQGGILVVKRPWPAMARTIWGDPERFKKSYFPEELGGRLYLAGDGTVRDKETGYFTIMGRIDDVLNVSGHRLGTMEIESALVSHELVAEAAVVGRPDDTTGEAVVAFVVLKRSRPEGEEAAALAKTLRDWVGKEIGPIAKPKDIRFGDNLPKTRSGKIMRRLLRSLAKGEAITQDTSTLENPAILEQLAEVR</sequence>
<name>ACSA_BURP0</name>
<reference key="1">
    <citation type="journal article" date="2010" name="Genome Biol. Evol.">
        <title>Continuing evolution of Burkholderia mallei through genome reduction and large-scale rearrangements.</title>
        <authorList>
            <person name="Losada L."/>
            <person name="Ronning C.M."/>
            <person name="DeShazer D."/>
            <person name="Woods D."/>
            <person name="Fedorova N."/>
            <person name="Kim H.S."/>
            <person name="Shabalina S.A."/>
            <person name="Pearson T.R."/>
            <person name="Brinkac L."/>
            <person name="Tan P."/>
            <person name="Nandi T."/>
            <person name="Crabtree J."/>
            <person name="Badger J."/>
            <person name="Beckstrom-Sternberg S."/>
            <person name="Saqib M."/>
            <person name="Schutzer S.E."/>
            <person name="Keim P."/>
            <person name="Nierman W.C."/>
        </authorList>
    </citation>
    <scope>NUCLEOTIDE SEQUENCE [LARGE SCALE GENOMIC DNA]</scope>
    <source>
        <strain>1106a</strain>
    </source>
</reference>